<evidence type="ECO:0000255" key="1">
    <source>
        <dbReference type="HAMAP-Rule" id="MF_00294"/>
    </source>
</evidence>
<feature type="chain" id="PRO_0000356521" description="Large ribosomal subunit protein bL33A">
    <location>
        <begin position="1"/>
        <end position="49"/>
    </location>
</feature>
<keyword id="KW-0687">Ribonucleoprotein</keyword>
<keyword id="KW-0689">Ribosomal protein</keyword>
<accession>Q033B9</accession>
<dbReference type="EMBL" id="CP000425">
    <property type="protein sequence ID" value="ABJ71703.1"/>
    <property type="molecule type" value="Genomic_DNA"/>
</dbReference>
<dbReference type="SMR" id="Q033B9"/>
<dbReference type="KEGG" id="llc:LACR_0076"/>
<dbReference type="HOGENOM" id="CLU_190949_3_2_9"/>
<dbReference type="Proteomes" id="UP000000240">
    <property type="component" value="Chromosome"/>
</dbReference>
<dbReference type="GO" id="GO:0005737">
    <property type="term" value="C:cytoplasm"/>
    <property type="evidence" value="ECO:0007669"/>
    <property type="project" value="UniProtKB-ARBA"/>
</dbReference>
<dbReference type="GO" id="GO:1990904">
    <property type="term" value="C:ribonucleoprotein complex"/>
    <property type="evidence" value="ECO:0007669"/>
    <property type="project" value="UniProtKB-KW"/>
</dbReference>
<dbReference type="GO" id="GO:0005840">
    <property type="term" value="C:ribosome"/>
    <property type="evidence" value="ECO:0007669"/>
    <property type="project" value="UniProtKB-KW"/>
</dbReference>
<dbReference type="GO" id="GO:0003735">
    <property type="term" value="F:structural constituent of ribosome"/>
    <property type="evidence" value="ECO:0007669"/>
    <property type="project" value="InterPro"/>
</dbReference>
<dbReference type="GO" id="GO:0006412">
    <property type="term" value="P:translation"/>
    <property type="evidence" value="ECO:0007669"/>
    <property type="project" value="UniProtKB-UniRule"/>
</dbReference>
<dbReference type="Gene3D" id="2.20.28.120">
    <property type="entry name" value="Ribosomal protein L33"/>
    <property type="match status" value="1"/>
</dbReference>
<dbReference type="HAMAP" id="MF_00294">
    <property type="entry name" value="Ribosomal_bL33"/>
    <property type="match status" value="1"/>
</dbReference>
<dbReference type="InterPro" id="IPR001705">
    <property type="entry name" value="Ribosomal_bL33"/>
</dbReference>
<dbReference type="InterPro" id="IPR018264">
    <property type="entry name" value="Ribosomal_bL33_CS"/>
</dbReference>
<dbReference type="InterPro" id="IPR038584">
    <property type="entry name" value="Ribosomal_bL33_sf"/>
</dbReference>
<dbReference type="InterPro" id="IPR011332">
    <property type="entry name" value="Ribosomal_zn-bd"/>
</dbReference>
<dbReference type="NCBIfam" id="NF001764">
    <property type="entry name" value="PRK00504.1"/>
    <property type="match status" value="1"/>
</dbReference>
<dbReference type="NCBIfam" id="NF001860">
    <property type="entry name" value="PRK00595.1"/>
    <property type="match status" value="1"/>
</dbReference>
<dbReference type="NCBIfam" id="TIGR01023">
    <property type="entry name" value="rpmG_bact"/>
    <property type="match status" value="1"/>
</dbReference>
<dbReference type="PANTHER" id="PTHR43168">
    <property type="entry name" value="50S RIBOSOMAL PROTEIN L33, CHLOROPLASTIC"/>
    <property type="match status" value="1"/>
</dbReference>
<dbReference type="PANTHER" id="PTHR43168:SF2">
    <property type="entry name" value="LARGE RIBOSOMAL SUBUNIT PROTEIN BL33C"/>
    <property type="match status" value="1"/>
</dbReference>
<dbReference type="Pfam" id="PF00471">
    <property type="entry name" value="Ribosomal_L33"/>
    <property type="match status" value="1"/>
</dbReference>
<dbReference type="SUPFAM" id="SSF57829">
    <property type="entry name" value="Zn-binding ribosomal proteins"/>
    <property type="match status" value="1"/>
</dbReference>
<dbReference type="PROSITE" id="PS00582">
    <property type="entry name" value="RIBOSOMAL_L33"/>
    <property type="match status" value="1"/>
</dbReference>
<sequence>MRVNITLEHKESGERLYLTQKNKRNTPDKLELKKYSKKLRKHVIFKEVK</sequence>
<name>RL331_LACLS</name>
<gene>
    <name evidence="1" type="primary">rpmG1</name>
    <name type="ordered locus">LACR_0076</name>
</gene>
<organism>
    <name type="scientific">Lactococcus lactis subsp. cremoris (strain SK11)</name>
    <dbReference type="NCBI Taxonomy" id="272622"/>
    <lineage>
        <taxon>Bacteria</taxon>
        <taxon>Bacillati</taxon>
        <taxon>Bacillota</taxon>
        <taxon>Bacilli</taxon>
        <taxon>Lactobacillales</taxon>
        <taxon>Streptococcaceae</taxon>
        <taxon>Lactococcus</taxon>
        <taxon>Lactococcus cremoris subsp. cremoris</taxon>
    </lineage>
</organism>
<comment type="similarity">
    <text evidence="1">Belongs to the bacterial ribosomal protein bL33 family.</text>
</comment>
<proteinExistence type="inferred from homology"/>
<protein>
    <recommendedName>
        <fullName evidence="1">Large ribosomal subunit protein bL33A</fullName>
    </recommendedName>
    <alternativeName>
        <fullName evidence="1">50S ribosomal protein L33 1</fullName>
    </alternativeName>
</protein>
<reference key="1">
    <citation type="journal article" date="2006" name="Proc. Natl. Acad. Sci. U.S.A.">
        <title>Comparative genomics of the lactic acid bacteria.</title>
        <authorList>
            <person name="Makarova K.S."/>
            <person name="Slesarev A."/>
            <person name="Wolf Y.I."/>
            <person name="Sorokin A."/>
            <person name="Mirkin B."/>
            <person name="Koonin E.V."/>
            <person name="Pavlov A."/>
            <person name="Pavlova N."/>
            <person name="Karamychev V."/>
            <person name="Polouchine N."/>
            <person name="Shakhova V."/>
            <person name="Grigoriev I."/>
            <person name="Lou Y."/>
            <person name="Rohksar D."/>
            <person name="Lucas S."/>
            <person name="Huang K."/>
            <person name="Goodstein D.M."/>
            <person name="Hawkins T."/>
            <person name="Plengvidhya V."/>
            <person name="Welker D."/>
            <person name="Hughes J."/>
            <person name="Goh Y."/>
            <person name="Benson A."/>
            <person name="Baldwin K."/>
            <person name="Lee J.-H."/>
            <person name="Diaz-Muniz I."/>
            <person name="Dosti B."/>
            <person name="Smeianov V."/>
            <person name="Wechter W."/>
            <person name="Barabote R."/>
            <person name="Lorca G."/>
            <person name="Altermann E."/>
            <person name="Barrangou R."/>
            <person name="Ganesan B."/>
            <person name="Xie Y."/>
            <person name="Rawsthorne H."/>
            <person name="Tamir D."/>
            <person name="Parker C."/>
            <person name="Breidt F."/>
            <person name="Broadbent J.R."/>
            <person name="Hutkins R."/>
            <person name="O'Sullivan D."/>
            <person name="Steele J."/>
            <person name="Unlu G."/>
            <person name="Saier M.H. Jr."/>
            <person name="Klaenhammer T."/>
            <person name="Richardson P."/>
            <person name="Kozyavkin S."/>
            <person name="Weimer B.C."/>
            <person name="Mills D.A."/>
        </authorList>
    </citation>
    <scope>NUCLEOTIDE SEQUENCE [LARGE SCALE GENOMIC DNA]</scope>
    <source>
        <strain>SK11</strain>
    </source>
</reference>